<dbReference type="BMRB" id="P0C8L1"/>
<dbReference type="SMR" id="P0C8L1"/>
<dbReference type="GO" id="GO:0005576">
    <property type="term" value="C:extracellular region"/>
    <property type="evidence" value="ECO:0007669"/>
    <property type="project" value="UniProtKB-SubCell"/>
</dbReference>
<dbReference type="GO" id="GO:0008200">
    <property type="term" value="F:ion channel inhibitor activity"/>
    <property type="evidence" value="ECO:0007669"/>
    <property type="project" value="InterPro"/>
</dbReference>
<dbReference type="GO" id="GO:0015459">
    <property type="term" value="F:potassium channel regulator activity"/>
    <property type="evidence" value="ECO:0007669"/>
    <property type="project" value="UniProtKB-KW"/>
</dbReference>
<dbReference type="GO" id="GO:0090729">
    <property type="term" value="F:toxin activity"/>
    <property type="evidence" value="ECO:0007669"/>
    <property type="project" value="UniProtKB-KW"/>
</dbReference>
<dbReference type="Gene3D" id="3.30.30.10">
    <property type="entry name" value="Knottin, scorpion toxin-like"/>
    <property type="match status" value="1"/>
</dbReference>
<dbReference type="InterPro" id="IPR036574">
    <property type="entry name" value="Scorpion_toxin-like_sf"/>
</dbReference>
<dbReference type="InterPro" id="IPR001947">
    <property type="entry name" value="Scorpion_toxinS_K_inh"/>
</dbReference>
<dbReference type="Pfam" id="PF00451">
    <property type="entry name" value="Toxin_2"/>
    <property type="match status" value="1"/>
</dbReference>
<dbReference type="PRINTS" id="PR00286">
    <property type="entry name" value="CHARYBDTOXIN"/>
</dbReference>
<dbReference type="SUPFAM" id="SSF57095">
    <property type="entry name" value="Scorpion toxin-like"/>
    <property type="match status" value="1"/>
</dbReference>
<dbReference type="PROSITE" id="PS01138">
    <property type="entry name" value="SCORP_SHORT_TOXIN"/>
    <property type="match status" value="1"/>
</dbReference>
<organism>
    <name type="scientific">Tityus stigmurus</name>
    <name type="common">Brazilian scorpion</name>
    <dbReference type="NCBI Taxonomy" id="50344"/>
    <lineage>
        <taxon>Eukaryota</taxon>
        <taxon>Metazoa</taxon>
        <taxon>Ecdysozoa</taxon>
        <taxon>Arthropoda</taxon>
        <taxon>Chelicerata</taxon>
        <taxon>Arachnida</taxon>
        <taxon>Scorpiones</taxon>
        <taxon>Buthida</taxon>
        <taxon>Buthoidea</taxon>
        <taxon>Buthidae</taxon>
        <taxon>Tityus</taxon>
    </lineage>
</organism>
<accession>P0C8L1</accession>
<evidence type="ECO:0000250" key="1"/>
<evidence type="ECO:0000269" key="2">
    <source>
    </source>
</evidence>
<evidence type="ECO:0000269" key="3">
    <source>
    </source>
</evidence>
<evidence type="ECO:0000305" key="4"/>
<feature type="chain" id="PRO_0000356889" description="Potassium channel toxin alpha-KTx 12.4">
    <location>
        <begin position="1"/>
        <end position="40"/>
    </location>
</feature>
<feature type="site" description="Basic residue of the functional dyad" evidence="1">
    <location>
        <position position="30"/>
    </location>
</feature>
<feature type="site" description="Aromatic residue of the functional dyad" evidence="1">
    <location>
        <position position="39"/>
    </location>
</feature>
<feature type="disulfide bond" evidence="2">
    <location>
        <begin position="2"/>
        <end position="5"/>
    </location>
</feature>
<feature type="disulfide bond" evidence="2">
    <location>
        <begin position="10"/>
        <end position="31"/>
    </location>
</feature>
<feature type="disulfide bond" evidence="2">
    <location>
        <begin position="16"/>
        <end position="36"/>
    </location>
</feature>
<feature type="disulfide bond" evidence="2">
    <location>
        <begin position="20"/>
        <end position="38"/>
    </location>
</feature>
<comment type="function">
    <text evidence="1">Inhibits high conductance calcium-activated potassium channels. Reversibly inhibits Shaker B potassium channels (By similarity).</text>
</comment>
<comment type="subcellular location">
    <subcellularLocation>
        <location>Secreted</location>
    </subcellularLocation>
</comment>
<comment type="tissue specificity">
    <text>Expressed by the venom gland.</text>
</comment>
<comment type="domain">
    <text evidence="4">Has the structural arrangement of an alpha-helix connected to antiparallel beta-sheets by disulfide bonds (CS-alpha/beta).</text>
</comment>
<comment type="mass spectrometry" mass="4506.6" method="Electrospray" evidence="3"/>
<comment type="similarity">
    <text evidence="4">Belongs to the short scorpion toxin superfamily. Potassium channel inhibitor family. Alpha-KTx 12 subfamily.</text>
</comment>
<keyword id="KW-1221">Calcium-activated potassium channel impairing toxin</keyword>
<keyword id="KW-0903">Direct protein sequencing</keyword>
<keyword id="KW-1015">Disulfide bond</keyword>
<keyword id="KW-0872">Ion channel impairing toxin</keyword>
<keyword id="KW-0528">Neurotoxin</keyword>
<keyword id="KW-0632">Potassium channel impairing toxin</keyword>
<keyword id="KW-0964">Secreted</keyword>
<keyword id="KW-0800">Toxin</keyword>
<protein>
    <recommendedName>
        <fullName>Potassium channel toxin alpha-KTx 12.4</fullName>
    </recommendedName>
    <alternativeName>
        <fullName>Butantoxin</fullName>
        <shortName>BuTX</shortName>
        <shortName>TstBut</shortName>
    </alternativeName>
</protein>
<sequence length="40" mass="4514">WCSTCLDLACGASRECYDPCFKAFGRAHGKCMNNKCRCYT</sequence>
<name>KA124_TITST</name>
<proteinExistence type="evidence at protein level"/>
<reference key="1">
    <citation type="journal article" date="2000" name="Arch. Biochem. Biophys.">
        <title>NMR solution structure of butantoxin.</title>
        <authorList>
            <person name="Holaday S.K. Jr."/>
            <person name="Martin B.M."/>
            <person name="Fletcher P.L. Jr."/>
            <person name="Krishna N.R."/>
        </authorList>
    </citation>
    <scope>PROTEIN SEQUENCE</scope>
    <scope>STRUCTURE BY NMR</scope>
    <scope>DISULFIDE BONDS</scope>
    <source>
        <tissue>Venom</tissue>
    </source>
</reference>
<reference key="2">
    <citation type="journal article" date="2007" name="Comp. Biochem. Physiol.">
        <title>Proteomic analysis of the venom from the scorpion Tityus stigmurus: biochemical and physiological comparison with other Tityus species.</title>
        <authorList>
            <person name="Batista C.V.F."/>
            <person name="Roman-Gonzalez S.A."/>
            <person name="Salas-Castillo S.P."/>
            <person name="Zamudio F.Z."/>
            <person name="Gomez-Lagunas F."/>
            <person name="Possani L.D."/>
        </authorList>
    </citation>
    <scope>PROTEIN SEQUENCE</scope>
    <scope>MASS SPECTROMETRY</scope>
    <source>
        <tissue>Venom</tissue>
    </source>
</reference>